<sequence>MAQFDNVSVKKKANVYFDGKCVSHTVLFPNGTRATVGVIFPGALTFNTGSPELMEINSGACKVRLSGESDWKAYGAGEKFTVPGNSSFDIEVTETLDYVCHFE</sequence>
<feature type="chain" id="PRO_0000298702" description="Pyrimidine/purine nucleoside phosphorylase">
    <location>
        <begin position="1"/>
        <end position="103"/>
    </location>
</feature>
<name>PPNP_METFK</name>
<evidence type="ECO:0000255" key="1">
    <source>
        <dbReference type="HAMAP-Rule" id="MF_01537"/>
    </source>
</evidence>
<proteinExistence type="inferred from homology"/>
<reference key="1">
    <citation type="submission" date="2006-03" db="EMBL/GenBank/DDBJ databases">
        <title>Complete sequence of Methylobacillus flagellatus KT.</title>
        <authorList>
            <consortium name="US DOE Joint Genome Institute"/>
            <person name="Copeland A."/>
            <person name="Lucas S."/>
            <person name="Lapidus A."/>
            <person name="Barry K."/>
            <person name="Detter J.C."/>
            <person name="Glavina del Rio T."/>
            <person name="Hammon N."/>
            <person name="Israni S."/>
            <person name="Dalin E."/>
            <person name="Tice H."/>
            <person name="Pitluck S."/>
            <person name="Brettin T."/>
            <person name="Bruce D."/>
            <person name="Han C."/>
            <person name="Tapia R."/>
            <person name="Saunders E."/>
            <person name="Gilna P."/>
            <person name="Schmutz J."/>
            <person name="Larimer F."/>
            <person name="Land M."/>
            <person name="Kyrpides N."/>
            <person name="Anderson I."/>
            <person name="Richardson P."/>
        </authorList>
    </citation>
    <scope>NUCLEOTIDE SEQUENCE [LARGE SCALE GENOMIC DNA]</scope>
    <source>
        <strain>ATCC 51484 / DSM 6875 / VKM B-1610 / KT</strain>
    </source>
</reference>
<organism>
    <name type="scientific">Methylobacillus flagellatus (strain ATCC 51484 / DSM 6875 / VKM B-1610 / KT)</name>
    <dbReference type="NCBI Taxonomy" id="265072"/>
    <lineage>
        <taxon>Bacteria</taxon>
        <taxon>Pseudomonadati</taxon>
        <taxon>Pseudomonadota</taxon>
        <taxon>Betaproteobacteria</taxon>
        <taxon>Nitrosomonadales</taxon>
        <taxon>Methylophilaceae</taxon>
        <taxon>Methylobacillus</taxon>
    </lineage>
</organism>
<protein>
    <recommendedName>
        <fullName evidence="1">Pyrimidine/purine nucleoside phosphorylase</fullName>
        <ecNumber evidence="1">2.4.2.1</ecNumber>
        <ecNumber evidence="1">2.4.2.2</ecNumber>
    </recommendedName>
    <alternativeName>
        <fullName evidence="1">Adenosine phosphorylase</fullName>
    </alternativeName>
    <alternativeName>
        <fullName evidence="1">Cytidine phosphorylase</fullName>
    </alternativeName>
    <alternativeName>
        <fullName evidence="1">Guanosine phosphorylase</fullName>
    </alternativeName>
    <alternativeName>
        <fullName evidence="1">Inosine phosphorylase</fullName>
    </alternativeName>
    <alternativeName>
        <fullName evidence="1">Thymidine phosphorylase</fullName>
    </alternativeName>
    <alternativeName>
        <fullName evidence="1">Uridine phosphorylase</fullName>
    </alternativeName>
    <alternativeName>
        <fullName evidence="1">Xanthosine phosphorylase</fullName>
    </alternativeName>
</protein>
<accession>Q1H0L2</accession>
<comment type="function">
    <text evidence="1">Catalyzes the phosphorolysis of diverse nucleosides, yielding D-ribose 1-phosphate and the respective free bases. Can use uridine, adenosine, guanosine, cytidine, thymidine, inosine and xanthosine as substrates. Also catalyzes the reverse reactions.</text>
</comment>
<comment type="catalytic activity">
    <reaction evidence="1">
        <text>a purine D-ribonucleoside + phosphate = a purine nucleobase + alpha-D-ribose 1-phosphate</text>
        <dbReference type="Rhea" id="RHEA:19805"/>
        <dbReference type="ChEBI" id="CHEBI:26386"/>
        <dbReference type="ChEBI" id="CHEBI:43474"/>
        <dbReference type="ChEBI" id="CHEBI:57720"/>
        <dbReference type="ChEBI" id="CHEBI:142355"/>
        <dbReference type="EC" id="2.4.2.1"/>
    </reaction>
</comment>
<comment type="catalytic activity">
    <reaction evidence="1">
        <text>adenosine + phosphate = alpha-D-ribose 1-phosphate + adenine</text>
        <dbReference type="Rhea" id="RHEA:27642"/>
        <dbReference type="ChEBI" id="CHEBI:16335"/>
        <dbReference type="ChEBI" id="CHEBI:16708"/>
        <dbReference type="ChEBI" id="CHEBI:43474"/>
        <dbReference type="ChEBI" id="CHEBI:57720"/>
        <dbReference type="EC" id="2.4.2.1"/>
    </reaction>
</comment>
<comment type="catalytic activity">
    <reaction evidence="1">
        <text>cytidine + phosphate = cytosine + alpha-D-ribose 1-phosphate</text>
        <dbReference type="Rhea" id="RHEA:52540"/>
        <dbReference type="ChEBI" id="CHEBI:16040"/>
        <dbReference type="ChEBI" id="CHEBI:17562"/>
        <dbReference type="ChEBI" id="CHEBI:43474"/>
        <dbReference type="ChEBI" id="CHEBI:57720"/>
        <dbReference type="EC" id="2.4.2.2"/>
    </reaction>
</comment>
<comment type="catalytic activity">
    <reaction evidence="1">
        <text>guanosine + phosphate = alpha-D-ribose 1-phosphate + guanine</text>
        <dbReference type="Rhea" id="RHEA:13233"/>
        <dbReference type="ChEBI" id="CHEBI:16235"/>
        <dbReference type="ChEBI" id="CHEBI:16750"/>
        <dbReference type="ChEBI" id="CHEBI:43474"/>
        <dbReference type="ChEBI" id="CHEBI:57720"/>
        <dbReference type="EC" id="2.4.2.1"/>
    </reaction>
</comment>
<comment type="catalytic activity">
    <reaction evidence="1">
        <text>inosine + phosphate = alpha-D-ribose 1-phosphate + hypoxanthine</text>
        <dbReference type="Rhea" id="RHEA:27646"/>
        <dbReference type="ChEBI" id="CHEBI:17368"/>
        <dbReference type="ChEBI" id="CHEBI:17596"/>
        <dbReference type="ChEBI" id="CHEBI:43474"/>
        <dbReference type="ChEBI" id="CHEBI:57720"/>
        <dbReference type="EC" id="2.4.2.1"/>
    </reaction>
</comment>
<comment type="catalytic activity">
    <reaction evidence="1">
        <text>thymidine + phosphate = 2-deoxy-alpha-D-ribose 1-phosphate + thymine</text>
        <dbReference type="Rhea" id="RHEA:16037"/>
        <dbReference type="ChEBI" id="CHEBI:17748"/>
        <dbReference type="ChEBI" id="CHEBI:17821"/>
        <dbReference type="ChEBI" id="CHEBI:43474"/>
        <dbReference type="ChEBI" id="CHEBI:57259"/>
        <dbReference type="EC" id="2.4.2.2"/>
    </reaction>
</comment>
<comment type="catalytic activity">
    <reaction evidence="1">
        <text>uridine + phosphate = alpha-D-ribose 1-phosphate + uracil</text>
        <dbReference type="Rhea" id="RHEA:24388"/>
        <dbReference type="ChEBI" id="CHEBI:16704"/>
        <dbReference type="ChEBI" id="CHEBI:17568"/>
        <dbReference type="ChEBI" id="CHEBI:43474"/>
        <dbReference type="ChEBI" id="CHEBI:57720"/>
        <dbReference type="EC" id="2.4.2.2"/>
    </reaction>
</comment>
<comment type="catalytic activity">
    <reaction evidence="1">
        <text>xanthosine + phosphate = alpha-D-ribose 1-phosphate + xanthine</text>
        <dbReference type="Rhea" id="RHEA:27638"/>
        <dbReference type="ChEBI" id="CHEBI:17712"/>
        <dbReference type="ChEBI" id="CHEBI:18107"/>
        <dbReference type="ChEBI" id="CHEBI:43474"/>
        <dbReference type="ChEBI" id="CHEBI:57720"/>
        <dbReference type="EC" id="2.4.2.1"/>
    </reaction>
</comment>
<comment type="similarity">
    <text evidence="1">Belongs to the nucleoside phosphorylase PpnP family.</text>
</comment>
<dbReference type="EC" id="2.4.2.1" evidence="1"/>
<dbReference type="EC" id="2.4.2.2" evidence="1"/>
<dbReference type="EMBL" id="CP000284">
    <property type="protein sequence ID" value="ABE49975.1"/>
    <property type="molecule type" value="Genomic_DNA"/>
</dbReference>
<dbReference type="RefSeq" id="WP_011479929.1">
    <property type="nucleotide sequence ID" value="NC_007947.1"/>
</dbReference>
<dbReference type="SMR" id="Q1H0L2"/>
<dbReference type="STRING" id="265072.Mfla_1707"/>
<dbReference type="KEGG" id="mfa:Mfla_1707"/>
<dbReference type="eggNOG" id="COG3123">
    <property type="taxonomic scope" value="Bacteria"/>
</dbReference>
<dbReference type="HOGENOM" id="CLU_157874_1_0_4"/>
<dbReference type="OrthoDB" id="9793848at2"/>
<dbReference type="Proteomes" id="UP000002440">
    <property type="component" value="Chromosome"/>
</dbReference>
<dbReference type="GO" id="GO:0005829">
    <property type="term" value="C:cytosol"/>
    <property type="evidence" value="ECO:0007669"/>
    <property type="project" value="TreeGrafter"/>
</dbReference>
<dbReference type="GO" id="GO:0047975">
    <property type="term" value="F:guanosine phosphorylase activity"/>
    <property type="evidence" value="ECO:0007669"/>
    <property type="project" value="UniProtKB-EC"/>
</dbReference>
<dbReference type="GO" id="GO:0004731">
    <property type="term" value="F:purine-nucleoside phosphorylase activity"/>
    <property type="evidence" value="ECO:0007669"/>
    <property type="project" value="UniProtKB-UniRule"/>
</dbReference>
<dbReference type="GO" id="GO:0009032">
    <property type="term" value="F:thymidine phosphorylase activity"/>
    <property type="evidence" value="ECO:0007669"/>
    <property type="project" value="UniProtKB-EC"/>
</dbReference>
<dbReference type="GO" id="GO:0004850">
    <property type="term" value="F:uridine phosphorylase activity"/>
    <property type="evidence" value="ECO:0007669"/>
    <property type="project" value="UniProtKB-EC"/>
</dbReference>
<dbReference type="CDD" id="cd20296">
    <property type="entry name" value="cupin_PpnP-like"/>
    <property type="match status" value="1"/>
</dbReference>
<dbReference type="Gene3D" id="2.60.120.10">
    <property type="entry name" value="Jelly Rolls"/>
    <property type="match status" value="1"/>
</dbReference>
<dbReference type="HAMAP" id="MF_01537">
    <property type="entry name" value="Nucleos_phosphorylase_PpnP"/>
    <property type="match status" value="1"/>
</dbReference>
<dbReference type="InterPro" id="IPR009664">
    <property type="entry name" value="Ppnp"/>
</dbReference>
<dbReference type="InterPro" id="IPR014710">
    <property type="entry name" value="RmlC-like_jellyroll"/>
</dbReference>
<dbReference type="InterPro" id="IPR011051">
    <property type="entry name" value="RmlC_Cupin_sf"/>
</dbReference>
<dbReference type="PANTHER" id="PTHR36540">
    <property type="entry name" value="PYRIMIDINE/PURINE NUCLEOSIDE PHOSPHORYLASE"/>
    <property type="match status" value="1"/>
</dbReference>
<dbReference type="PANTHER" id="PTHR36540:SF1">
    <property type="entry name" value="PYRIMIDINE_PURINE NUCLEOSIDE PHOSPHORYLASE"/>
    <property type="match status" value="1"/>
</dbReference>
<dbReference type="Pfam" id="PF06865">
    <property type="entry name" value="Ppnp"/>
    <property type="match status" value="1"/>
</dbReference>
<dbReference type="SUPFAM" id="SSF51182">
    <property type="entry name" value="RmlC-like cupins"/>
    <property type="match status" value="1"/>
</dbReference>
<gene>
    <name evidence="1" type="primary">ppnP</name>
    <name type="ordered locus">Mfla_1707</name>
</gene>
<keyword id="KW-0328">Glycosyltransferase</keyword>
<keyword id="KW-1185">Reference proteome</keyword>
<keyword id="KW-0808">Transferase</keyword>